<gene>
    <name type="primary">Mrgprg</name>
    <name type="synonym">Mrgg</name>
</gene>
<dbReference type="EMBL" id="AF518248">
    <property type="protein sequence ID" value="AAQ08320.1"/>
    <property type="molecule type" value="Genomic_DNA"/>
</dbReference>
<dbReference type="RefSeq" id="NP_982296.1">
    <property type="nucleotide sequence ID" value="NM_203470.1"/>
</dbReference>
<dbReference type="SMR" id="Q7TN39"/>
<dbReference type="STRING" id="10116.ENSRNOP00000028126"/>
<dbReference type="GeneID" id="309133"/>
<dbReference type="KEGG" id="rno:309133"/>
<dbReference type="UCSC" id="RGD:738044">
    <property type="organism name" value="rat"/>
</dbReference>
<dbReference type="AGR" id="RGD:738044"/>
<dbReference type="CTD" id="386746"/>
<dbReference type="RGD" id="738044">
    <property type="gene designation" value="Mrgprg"/>
</dbReference>
<dbReference type="eggNOG" id="ENOG502TKZP">
    <property type="taxonomic scope" value="Eukaryota"/>
</dbReference>
<dbReference type="InParanoid" id="Q7TN39"/>
<dbReference type="OrthoDB" id="9450540at2759"/>
<dbReference type="PhylomeDB" id="Q7TN39"/>
<dbReference type="PRO" id="PR:Q7TN39"/>
<dbReference type="Proteomes" id="UP000002494">
    <property type="component" value="Unplaced"/>
</dbReference>
<dbReference type="GO" id="GO:0005886">
    <property type="term" value="C:plasma membrane"/>
    <property type="evidence" value="ECO:0000318"/>
    <property type="project" value="GO_Central"/>
</dbReference>
<dbReference type="GO" id="GO:0004930">
    <property type="term" value="F:G protein-coupled receptor activity"/>
    <property type="evidence" value="ECO:0000318"/>
    <property type="project" value="GO_Central"/>
</dbReference>
<dbReference type="GO" id="GO:0007186">
    <property type="term" value="P:G protein-coupled receptor signaling pathway"/>
    <property type="evidence" value="ECO:0000318"/>
    <property type="project" value="GO_Central"/>
</dbReference>
<dbReference type="CDD" id="cd15111">
    <property type="entry name" value="7tmA_MrgprG"/>
    <property type="match status" value="1"/>
</dbReference>
<dbReference type="FunFam" id="1.20.1070.10:FF:000193">
    <property type="entry name" value="Mas-related G-protein coupled receptor member E"/>
    <property type="match status" value="1"/>
</dbReference>
<dbReference type="Gene3D" id="1.20.1070.10">
    <property type="entry name" value="Rhodopsin 7-helix transmembrane proteins"/>
    <property type="match status" value="1"/>
</dbReference>
<dbReference type="InterPro" id="IPR000276">
    <property type="entry name" value="GPCR_Rhodpsn"/>
</dbReference>
<dbReference type="InterPro" id="IPR026234">
    <property type="entry name" value="MRGPCRFAMILY"/>
</dbReference>
<dbReference type="InterPro" id="IPR027336">
    <property type="entry name" value="MRGPCRG"/>
</dbReference>
<dbReference type="PANTHER" id="PTHR11334">
    <property type="entry name" value="MAS-RELATED G-PROTEIN COUPLED RECEPTOR"/>
    <property type="match status" value="1"/>
</dbReference>
<dbReference type="PANTHER" id="PTHR11334:SF32">
    <property type="entry name" value="MAS-RELATED G-PROTEIN COUPLED RECEPTOR MEMBER G"/>
    <property type="match status" value="1"/>
</dbReference>
<dbReference type="PRINTS" id="PR00237">
    <property type="entry name" value="GPCRRHODOPSN"/>
</dbReference>
<dbReference type="PRINTS" id="PR02108">
    <property type="entry name" value="MRGPCRFAMILY"/>
</dbReference>
<dbReference type="SUPFAM" id="SSF81321">
    <property type="entry name" value="Family A G protein-coupled receptor-like"/>
    <property type="match status" value="1"/>
</dbReference>
<accession>Q7TN39</accession>
<sequence length="289" mass="32212">MLSIFNIWGTFNRVLFFLSLTVSLAGLAGNTLLLWHLGLRIKKGPFNTYLLHLAAADFLFLSCQVGFSIAKIASGYEDTLYFPVTFLWFAVGLWLLAAFIVDCCLSYMFPSFCGPNCRPRYTSFVLCLVIWALTMLAVLLPANACGLLYNRMSLLVCLKYHWVSVVWLGVLASTACGASMFLLVFGNCCSSQPPSKFCKLAQCSGILLFFCRLPLVFYWCLRPVIKFLLPFFFPLATLLACIDSSAKPLLYYLKGRQLRKEPLQVALNRALGEESQSSSGGISLPMSRV</sequence>
<proteinExistence type="inferred from homology"/>
<name>MRGRG_RAT</name>
<reference key="1">
    <citation type="journal article" date="2003" name="Proc. Natl. Acad. Sci. U.S.A.">
        <title>Atypical expansion in mice of the sensory neuron-specific Mrg G protein-coupled receptor family.</title>
        <authorList>
            <person name="Zylka M.J."/>
            <person name="Dong X."/>
            <person name="Southwell A.L."/>
            <person name="Anderson D.J."/>
        </authorList>
    </citation>
    <scope>NUCLEOTIDE SEQUENCE [GENOMIC DNA]</scope>
    <source>
        <strain>Sprague-Dawley</strain>
    </source>
</reference>
<comment type="function">
    <text>Orphan receptor. May regulate nociceptor function and/or development, including the sensation or modulation of pain.</text>
</comment>
<comment type="subcellular location">
    <subcellularLocation>
        <location>Cell membrane</location>
        <topology>Multi-pass membrane protein</topology>
    </subcellularLocation>
</comment>
<comment type="similarity">
    <text evidence="2">Belongs to the G-protein coupled receptor 1 family. Mas subfamily.</text>
</comment>
<organism>
    <name type="scientific">Rattus norvegicus</name>
    <name type="common">Rat</name>
    <dbReference type="NCBI Taxonomy" id="10116"/>
    <lineage>
        <taxon>Eukaryota</taxon>
        <taxon>Metazoa</taxon>
        <taxon>Chordata</taxon>
        <taxon>Craniata</taxon>
        <taxon>Vertebrata</taxon>
        <taxon>Euteleostomi</taxon>
        <taxon>Mammalia</taxon>
        <taxon>Eutheria</taxon>
        <taxon>Euarchontoglires</taxon>
        <taxon>Glires</taxon>
        <taxon>Rodentia</taxon>
        <taxon>Myomorpha</taxon>
        <taxon>Muroidea</taxon>
        <taxon>Muridae</taxon>
        <taxon>Murinae</taxon>
        <taxon>Rattus</taxon>
    </lineage>
</organism>
<keyword id="KW-1003">Cell membrane</keyword>
<keyword id="KW-0297">G-protein coupled receptor</keyword>
<keyword id="KW-0472">Membrane</keyword>
<keyword id="KW-0675">Receptor</keyword>
<keyword id="KW-1185">Reference proteome</keyword>
<keyword id="KW-0807">Transducer</keyword>
<keyword id="KW-0812">Transmembrane</keyword>
<keyword id="KW-1133">Transmembrane helix</keyword>
<protein>
    <recommendedName>
        <fullName>Mas-related G-protein coupled receptor member G</fullName>
    </recommendedName>
</protein>
<feature type="chain" id="PRO_0000069769" description="Mas-related G-protein coupled receptor member G">
    <location>
        <begin position="1"/>
        <end position="289"/>
    </location>
</feature>
<feature type="topological domain" description="Extracellular" evidence="1">
    <location>
        <begin position="1"/>
        <end position="13"/>
    </location>
</feature>
<feature type="transmembrane region" description="Helical; Name=1" evidence="1">
    <location>
        <begin position="14"/>
        <end position="34"/>
    </location>
</feature>
<feature type="topological domain" description="Cytoplasmic" evidence="1">
    <location>
        <begin position="35"/>
        <end position="49"/>
    </location>
</feature>
<feature type="transmembrane region" description="Helical; Name=2" evidence="1">
    <location>
        <begin position="50"/>
        <end position="70"/>
    </location>
</feature>
<feature type="topological domain" description="Extracellular" evidence="1">
    <location>
        <begin position="71"/>
        <end position="80"/>
    </location>
</feature>
<feature type="transmembrane region" description="Helical; Name=3" evidence="1">
    <location>
        <begin position="81"/>
        <end position="101"/>
    </location>
</feature>
<feature type="topological domain" description="Cytoplasmic" evidence="1">
    <location>
        <begin position="102"/>
        <end position="123"/>
    </location>
</feature>
<feature type="transmembrane region" description="Helical; Name=4" evidence="1">
    <location>
        <begin position="124"/>
        <end position="144"/>
    </location>
</feature>
<feature type="topological domain" description="Extracellular" evidence="1">
    <location>
        <begin position="145"/>
        <end position="164"/>
    </location>
</feature>
<feature type="transmembrane region" description="Helical; Name=5" evidence="1">
    <location>
        <begin position="165"/>
        <end position="185"/>
    </location>
</feature>
<feature type="topological domain" description="Cytoplasmic" evidence="1">
    <location>
        <begin position="186"/>
        <end position="200"/>
    </location>
</feature>
<feature type="transmembrane region" description="Helical; Name=6" evidence="1">
    <location>
        <begin position="201"/>
        <end position="221"/>
    </location>
</feature>
<feature type="topological domain" description="Extracellular" evidence="1">
    <location>
        <position position="222"/>
    </location>
</feature>
<feature type="transmembrane region" description="Helical; Name=7" evidence="1">
    <location>
        <begin position="223"/>
        <end position="243"/>
    </location>
</feature>
<feature type="topological domain" description="Cytoplasmic" evidence="1">
    <location>
        <begin position="244"/>
        <end position="289"/>
    </location>
</feature>
<evidence type="ECO:0000255" key="1"/>
<evidence type="ECO:0000305" key="2"/>